<protein>
    <recommendedName>
        <fullName evidence="1">Putative AgrB-like protein</fullName>
        <ecNumber evidence="1">3.4.-.-</ecNumber>
    </recommendedName>
</protein>
<keyword id="KW-1003">Cell membrane</keyword>
<keyword id="KW-0378">Hydrolase</keyword>
<keyword id="KW-0472">Membrane</keyword>
<keyword id="KW-0645">Protease</keyword>
<keyword id="KW-0673">Quorum sensing</keyword>
<keyword id="KW-0812">Transmembrane</keyword>
<keyword id="KW-1133">Transmembrane helix</keyword>
<reference key="1">
    <citation type="journal article" date="2001" name="Science">
        <title>Comparative genomics of Listeria species.</title>
        <authorList>
            <person name="Glaser P."/>
            <person name="Frangeul L."/>
            <person name="Buchrieser C."/>
            <person name="Rusniok C."/>
            <person name="Amend A."/>
            <person name="Baquero F."/>
            <person name="Berche P."/>
            <person name="Bloecker H."/>
            <person name="Brandt P."/>
            <person name="Chakraborty T."/>
            <person name="Charbit A."/>
            <person name="Chetouani F."/>
            <person name="Couve E."/>
            <person name="de Daruvar A."/>
            <person name="Dehoux P."/>
            <person name="Domann E."/>
            <person name="Dominguez-Bernal G."/>
            <person name="Duchaud E."/>
            <person name="Durant L."/>
            <person name="Dussurget O."/>
            <person name="Entian K.-D."/>
            <person name="Fsihi H."/>
            <person name="Garcia-del Portillo F."/>
            <person name="Garrido P."/>
            <person name="Gautier L."/>
            <person name="Goebel W."/>
            <person name="Gomez-Lopez N."/>
            <person name="Hain T."/>
            <person name="Hauf J."/>
            <person name="Jackson D."/>
            <person name="Jones L.-M."/>
            <person name="Kaerst U."/>
            <person name="Kreft J."/>
            <person name="Kuhn M."/>
            <person name="Kunst F."/>
            <person name="Kurapkat G."/>
            <person name="Madueno E."/>
            <person name="Maitournam A."/>
            <person name="Mata Vicente J."/>
            <person name="Ng E."/>
            <person name="Nedjari H."/>
            <person name="Nordsiek G."/>
            <person name="Novella S."/>
            <person name="de Pablos B."/>
            <person name="Perez-Diaz J.-C."/>
            <person name="Purcell R."/>
            <person name="Remmel B."/>
            <person name="Rose M."/>
            <person name="Schlueter T."/>
            <person name="Simoes N."/>
            <person name="Tierrez A."/>
            <person name="Vazquez-Boland J.-A."/>
            <person name="Voss H."/>
            <person name="Wehland J."/>
            <person name="Cossart P."/>
        </authorList>
    </citation>
    <scope>NUCLEOTIDE SEQUENCE [LARGE SCALE GENOMIC DNA]</scope>
    <source>
        <strain>ATCC BAA-680 / CLIP 11262</strain>
    </source>
</reference>
<accession>Q92FR2</accession>
<organism>
    <name type="scientific">Listeria innocua serovar 6a (strain ATCC BAA-680 / CLIP 11262)</name>
    <dbReference type="NCBI Taxonomy" id="272626"/>
    <lineage>
        <taxon>Bacteria</taxon>
        <taxon>Bacillati</taxon>
        <taxon>Bacillota</taxon>
        <taxon>Bacilli</taxon>
        <taxon>Bacillales</taxon>
        <taxon>Listeriaceae</taxon>
        <taxon>Listeria</taxon>
    </lineage>
</organism>
<dbReference type="EC" id="3.4.-.-" evidence="1"/>
<dbReference type="EMBL" id="AL596163">
    <property type="protein sequence ID" value="CAC95274.1"/>
    <property type="molecule type" value="Genomic_DNA"/>
</dbReference>
<dbReference type="PIR" id="AB1438">
    <property type="entry name" value="AB1438"/>
</dbReference>
<dbReference type="RefSeq" id="WP_003764750.1">
    <property type="nucleotide sequence ID" value="NC_003212.1"/>
</dbReference>
<dbReference type="STRING" id="272626.gene:17564352"/>
<dbReference type="KEGG" id="lin:lin0041"/>
<dbReference type="eggNOG" id="COG4512">
    <property type="taxonomic scope" value="Bacteria"/>
</dbReference>
<dbReference type="HOGENOM" id="CLU_098969_2_2_9"/>
<dbReference type="OrthoDB" id="2360675at2"/>
<dbReference type="Proteomes" id="UP000002513">
    <property type="component" value="Chromosome"/>
</dbReference>
<dbReference type="GO" id="GO:0005886">
    <property type="term" value="C:plasma membrane"/>
    <property type="evidence" value="ECO:0007669"/>
    <property type="project" value="UniProtKB-SubCell"/>
</dbReference>
<dbReference type="GO" id="GO:0008233">
    <property type="term" value="F:peptidase activity"/>
    <property type="evidence" value="ECO:0007669"/>
    <property type="project" value="UniProtKB-UniRule"/>
</dbReference>
<dbReference type="GO" id="GO:0006508">
    <property type="term" value="P:proteolysis"/>
    <property type="evidence" value="ECO:0007669"/>
    <property type="project" value="UniProtKB-KW"/>
</dbReference>
<dbReference type="GO" id="GO:0009372">
    <property type="term" value="P:quorum sensing"/>
    <property type="evidence" value="ECO:0007669"/>
    <property type="project" value="UniProtKB-UniRule"/>
</dbReference>
<dbReference type="HAMAP" id="MF_00784">
    <property type="entry name" value="AgrB"/>
    <property type="match status" value="1"/>
</dbReference>
<dbReference type="InterPro" id="IPR006741">
    <property type="entry name" value="AgrB"/>
</dbReference>
<dbReference type="NCBIfam" id="NF002210">
    <property type="entry name" value="PRK01100.1"/>
    <property type="match status" value="1"/>
</dbReference>
<dbReference type="Pfam" id="PF04647">
    <property type="entry name" value="AgrB"/>
    <property type="match status" value="1"/>
</dbReference>
<dbReference type="SMART" id="SM00793">
    <property type="entry name" value="AgrB"/>
    <property type="match status" value="1"/>
</dbReference>
<comment type="function">
    <text evidence="1">May be involved in the proteolytic processing of a quorum sensing system signal molecule precursor.</text>
</comment>
<comment type="subcellular location">
    <subcellularLocation>
        <location evidence="1">Cell membrane</location>
        <topology evidence="1">Multi-pass membrane protein</topology>
    </subcellularLocation>
</comment>
<comment type="similarity">
    <text evidence="1">Belongs to the AgrB family.</text>
</comment>
<feature type="chain" id="PRO_0000168140" description="Putative AgrB-like protein">
    <location>
        <begin position="1"/>
        <end position="204"/>
    </location>
</feature>
<feature type="transmembrane region" description="Helical" evidence="1">
    <location>
        <begin position="51"/>
        <end position="73"/>
    </location>
</feature>
<feature type="transmembrane region" description="Helical" evidence="1">
    <location>
        <begin position="87"/>
        <end position="107"/>
    </location>
</feature>
<feature type="transmembrane region" description="Helical" evidence="1">
    <location>
        <begin position="111"/>
        <end position="131"/>
    </location>
</feature>
<feature type="transmembrane region" description="Helical" evidence="1">
    <location>
        <begin position="151"/>
        <end position="168"/>
    </location>
</feature>
<feature type="transmembrane region" description="Helical" evidence="1">
    <location>
        <begin position="173"/>
        <end position="190"/>
    </location>
</feature>
<gene>
    <name type="ordered locus">lin0041</name>
</gene>
<proteinExistence type="inferred from homology"/>
<evidence type="ECO:0000255" key="1">
    <source>
        <dbReference type="HAMAP-Rule" id="MF_00784"/>
    </source>
</evidence>
<name>AGRB_LISIN</name>
<sequence length="204" mass="23445">MSNFTAKVPLSERMADVLISKDRWKDDEEGYLKVKYGLEIILINVMKFAIVYGIALVTGLLLQTVTVHLSYLWLRRYSFGLHATKTLNCTLISLTMFVLAPFIFQNIPSNNWIVLGTFAFILLNMFLFAPADTESLPLIGEEHRKKLKRKAMIGTLILTGIALLIPFAEMKTLIMVGSLFQVISINPLTYKLLKRRYRNYEKYE</sequence>